<keyword id="KW-0007">Acetylation</keyword>
<keyword id="KW-0158">Chromosome</keyword>
<keyword id="KW-0238">DNA-binding</keyword>
<keyword id="KW-0488">Methylation</keyword>
<keyword id="KW-0544">Nucleosome core</keyword>
<keyword id="KW-0539">Nucleus</keyword>
<sequence>MSGRGKGGKAKAKAKSRSSRAGLQFPVGRIHRLLRKGNYAERVGAGAPVYLAAVLEYLAAEVLELAGNAARDNKKSRIIPRHLQLAIRNDEELNKLLSGVTIAQGGVLPNIQAVLLPKKTQKAAK</sequence>
<organism>
    <name type="scientific">Mytilus edulis</name>
    <name type="common">Blue mussel</name>
    <dbReference type="NCBI Taxonomy" id="6550"/>
    <lineage>
        <taxon>Eukaryota</taxon>
        <taxon>Metazoa</taxon>
        <taxon>Spiralia</taxon>
        <taxon>Lophotrochozoa</taxon>
        <taxon>Mollusca</taxon>
        <taxon>Bivalvia</taxon>
        <taxon>Autobranchia</taxon>
        <taxon>Pteriomorphia</taxon>
        <taxon>Mytilida</taxon>
        <taxon>Mytiloidea</taxon>
        <taxon>Mytilidae</taxon>
        <taxon>Mytilinae</taxon>
        <taxon>Mytilus</taxon>
    </lineage>
</organism>
<name>H2A_MYTED</name>
<proteinExistence type="inferred from homology"/>
<dbReference type="EMBL" id="AJ492923">
    <property type="protein sequence ID" value="CAD37817.1"/>
    <property type="molecule type" value="Genomic_DNA"/>
</dbReference>
<dbReference type="EMBL" id="AJ492924">
    <property type="protein sequence ID" value="CAD37821.1"/>
    <property type="molecule type" value="Genomic_DNA"/>
</dbReference>
<dbReference type="EMBL" id="AY267757">
    <property type="protein sequence ID" value="AAP94676.1"/>
    <property type="molecule type" value="Genomic_DNA"/>
</dbReference>
<dbReference type="RefSeq" id="XP_071151065.1">
    <property type="nucleotide sequence ID" value="XM_071294964.1"/>
</dbReference>
<dbReference type="RefSeq" id="XP_071151068.1">
    <property type="nucleotide sequence ID" value="XM_071294967.1"/>
</dbReference>
<dbReference type="RefSeq" id="XP_071151069.1">
    <property type="nucleotide sequence ID" value="XM_071294968.1"/>
</dbReference>
<dbReference type="RefSeq" id="XP_071151072.1">
    <property type="nucleotide sequence ID" value="XM_071294971.1"/>
</dbReference>
<dbReference type="RefSeq" id="XP_071151574.1">
    <property type="nucleotide sequence ID" value="XM_071295473.1"/>
</dbReference>
<dbReference type="RefSeq" id="XP_071151577.1">
    <property type="nucleotide sequence ID" value="XM_071295476.1"/>
</dbReference>
<dbReference type="RefSeq" id="XP_071151799.1">
    <property type="nucleotide sequence ID" value="XM_071295698.1"/>
</dbReference>
<dbReference type="RefSeq" id="XP_071151800.1">
    <property type="nucleotide sequence ID" value="XM_071295699.1"/>
</dbReference>
<dbReference type="RefSeq" id="XP_071152216.1">
    <property type="nucleotide sequence ID" value="XM_071296115.1"/>
</dbReference>
<dbReference type="RefSeq" id="XP_071152217.1">
    <property type="nucleotide sequence ID" value="XM_071296116.1"/>
</dbReference>
<dbReference type="RefSeq" id="XP_071152218.1">
    <property type="nucleotide sequence ID" value="XM_071296117.1"/>
</dbReference>
<dbReference type="SMR" id="Q8I0T3"/>
<dbReference type="GeneID" id="139505203"/>
<dbReference type="GeneID" id="139505207"/>
<dbReference type="GeneID" id="139505208"/>
<dbReference type="GeneID" id="139505211"/>
<dbReference type="GeneID" id="139506486"/>
<dbReference type="GeneID" id="139506489"/>
<dbReference type="GeneID" id="139507313"/>
<dbReference type="GeneID" id="139507315"/>
<dbReference type="GeneID" id="139509205"/>
<dbReference type="GeneID" id="139509206"/>
<dbReference type="GeneID" id="139509207"/>
<dbReference type="GO" id="GO:0000786">
    <property type="term" value="C:nucleosome"/>
    <property type="evidence" value="ECO:0007669"/>
    <property type="project" value="UniProtKB-KW"/>
</dbReference>
<dbReference type="GO" id="GO:0005634">
    <property type="term" value="C:nucleus"/>
    <property type="evidence" value="ECO:0007669"/>
    <property type="project" value="UniProtKB-SubCell"/>
</dbReference>
<dbReference type="GO" id="GO:0003677">
    <property type="term" value="F:DNA binding"/>
    <property type="evidence" value="ECO:0007669"/>
    <property type="project" value="UniProtKB-KW"/>
</dbReference>
<dbReference type="GO" id="GO:0046982">
    <property type="term" value="F:protein heterodimerization activity"/>
    <property type="evidence" value="ECO:0007669"/>
    <property type="project" value="InterPro"/>
</dbReference>
<dbReference type="GO" id="GO:0030527">
    <property type="term" value="F:structural constituent of chromatin"/>
    <property type="evidence" value="ECO:0007669"/>
    <property type="project" value="InterPro"/>
</dbReference>
<dbReference type="CDD" id="cd00074">
    <property type="entry name" value="HFD_H2A"/>
    <property type="match status" value="1"/>
</dbReference>
<dbReference type="FunFam" id="1.10.20.10:FF:000020">
    <property type="entry name" value="Histone H2A"/>
    <property type="match status" value="1"/>
</dbReference>
<dbReference type="Gene3D" id="1.10.20.10">
    <property type="entry name" value="Histone, subunit A"/>
    <property type="match status" value="1"/>
</dbReference>
<dbReference type="InterPro" id="IPR009072">
    <property type="entry name" value="Histone-fold"/>
</dbReference>
<dbReference type="InterPro" id="IPR002119">
    <property type="entry name" value="Histone_H2A"/>
</dbReference>
<dbReference type="InterPro" id="IPR007125">
    <property type="entry name" value="Histone_H2A/H2B/H3"/>
</dbReference>
<dbReference type="InterPro" id="IPR032454">
    <property type="entry name" value="Histone_H2A_C"/>
</dbReference>
<dbReference type="InterPro" id="IPR032458">
    <property type="entry name" value="Histone_H2A_CS"/>
</dbReference>
<dbReference type="PANTHER" id="PTHR23430">
    <property type="entry name" value="HISTONE H2A"/>
    <property type="match status" value="1"/>
</dbReference>
<dbReference type="Pfam" id="PF00125">
    <property type="entry name" value="Histone"/>
    <property type="match status" value="1"/>
</dbReference>
<dbReference type="Pfam" id="PF16211">
    <property type="entry name" value="Histone_H2A_C"/>
    <property type="match status" value="1"/>
</dbReference>
<dbReference type="PRINTS" id="PR00620">
    <property type="entry name" value="HISTONEH2A"/>
</dbReference>
<dbReference type="SMART" id="SM00414">
    <property type="entry name" value="H2A"/>
    <property type="match status" value="1"/>
</dbReference>
<dbReference type="SUPFAM" id="SSF47113">
    <property type="entry name" value="Histone-fold"/>
    <property type="match status" value="1"/>
</dbReference>
<dbReference type="PROSITE" id="PS00046">
    <property type="entry name" value="HISTONE_H2A"/>
    <property type="match status" value="1"/>
</dbReference>
<evidence type="ECO:0000250" key="1"/>
<evidence type="ECO:0000256" key="2">
    <source>
        <dbReference type="SAM" id="MobiDB-lite"/>
    </source>
</evidence>
<evidence type="ECO:0000305" key="3"/>
<reference key="1">
    <citation type="submission" date="2002-07" db="EMBL/GenBank/DDBJ databases">
        <authorList>
            <person name="Albig W."/>
            <person name="Warthorst U."/>
            <person name="Drabent B."/>
            <person name="Parts E."/>
            <person name="Cornudella L."/>
            <person name="Doenecke D."/>
        </authorList>
    </citation>
    <scope>NUCLEOTIDE SEQUENCE [GENOMIC DNA]</scope>
</reference>
<reference key="2">
    <citation type="journal article" date="2004" name="J. Mol. Evol.">
        <title>Molecular evolutionary characterization of the mussel Mytilus histone multigene family: first record of a tandemly repeated unit of five histone genes containing an H1 subtype with 'orphon' features.</title>
        <authorList>
            <person name="Eirin-Lopez J.M."/>
            <person name="Ruiz F."/>
            <person name="Gonzalez-Tizon A.M."/>
            <person name="Martinez A."/>
            <person name="Sanchez L."/>
            <person name="Mendez J."/>
        </authorList>
    </citation>
    <scope>NUCLEOTIDE SEQUENCE [GENOMIC DNA]</scope>
</reference>
<accession>Q8I0T3</accession>
<protein>
    <recommendedName>
        <fullName>Histone H2A</fullName>
    </recommendedName>
</protein>
<comment type="function">
    <text>Core component of nucleosome. Nucleosomes wrap and compact DNA into chromatin, limiting DNA accessibility to the cellular machineries which require DNA as a template. Histones thereby play a central role in transcription regulation, DNA repair, DNA replication and chromosomal stability. DNA accessibility is regulated via a complex set of post-translational modifications of histones, also called histone code, and nucleosome remodeling.</text>
</comment>
<comment type="subunit">
    <text>The nucleosome is a histone octamer containing two molecules each of H2A, H2B, H3 and H4 assembled in one H3-H4 heterotetramer and two H2A-H2B heterodimers. The octamer wraps approximately 147 bp of DNA.</text>
</comment>
<comment type="subcellular location">
    <subcellularLocation>
        <location>Nucleus</location>
    </subcellularLocation>
    <subcellularLocation>
        <location>Chromosome</location>
    </subcellularLocation>
</comment>
<comment type="similarity">
    <text evidence="3">Belongs to the histone H2A family.</text>
</comment>
<feature type="initiator methionine" description="Removed" evidence="1">
    <location>
        <position position="1"/>
    </location>
</feature>
<feature type="chain" id="PRO_0000055253" description="Histone H2A">
    <location>
        <begin position="2"/>
        <end position="125"/>
    </location>
</feature>
<feature type="region of interest" description="Disordered" evidence="2">
    <location>
        <begin position="1"/>
        <end position="21"/>
    </location>
</feature>
<feature type="compositionally biased region" description="Basic residues" evidence="2">
    <location>
        <begin position="1"/>
        <end position="18"/>
    </location>
</feature>
<feature type="modified residue" description="N-acetylserine" evidence="1">
    <location>
        <position position="2"/>
    </location>
</feature>
<feature type="modified residue" description="N5-methylglutamine" evidence="1">
    <location>
        <position position="104"/>
    </location>
</feature>